<accession>Q8P8R8</accession>
<proteinExistence type="inferred from homology"/>
<comment type="function">
    <text evidence="1">H(+)-stimulated, divalent metal cation uptake system.</text>
</comment>
<comment type="subcellular location">
    <subcellularLocation>
        <location evidence="1">Cell inner membrane</location>
        <topology evidence="1">Multi-pass membrane protein</topology>
    </subcellularLocation>
</comment>
<comment type="similarity">
    <text evidence="1">Belongs to the NRAMP family.</text>
</comment>
<gene>
    <name evidence="1" type="primary">mntH</name>
    <name type="ordered locus">XCC2171</name>
</gene>
<evidence type="ECO:0000255" key="1">
    <source>
        <dbReference type="HAMAP-Rule" id="MF_00221"/>
    </source>
</evidence>
<keyword id="KW-0997">Cell inner membrane</keyword>
<keyword id="KW-1003">Cell membrane</keyword>
<keyword id="KW-0406">Ion transport</keyword>
<keyword id="KW-0472">Membrane</keyword>
<keyword id="KW-1185">Reference proteome</keyword>
<keyword id="KW-0769">Symport</keyword>
<keyword id="KW-0812">Transmembrane</keyword>
<keyword id="KW-1133">Transmembrane helix</keyword>
<keyword id="KW-0813">Transport</keyword>
<feature type="chain" id="PRO_0000212644" description="Divalent metal cation transporter MntH">
    <location>
        <begin position="1"/>
        <end position="444"/>
    </location>
</feature>
<feature type="transmembrane region" description="Helical" evidence="1">
    <location>
        <begin position="31"/>
        <end position="51"/>
    </location>
</feature>
<feature type="transmembrane region" description="Helical" evidence="1">
    <location>
        <begin position="68"/>
        <end position="88"/>
    </location>
</feature>
<feature type="transmembrane region" description="Helical" evidence="1">
    <location>
        <begin position="115"/>
        <end position="135"/>
    </location>
</feature>
<feature type="transmembrane region" description="Helical" evidence="1">
    <location>
        <begin position="146"/>
        <end position="166"/>
    </location>
</feature>
<feature type="transmembrane region" description="Helical" evidence="1">
    <location>
        <begin position="175"/>
        <end position="195"/>
    </location>
</feature>
<feature type="transmembrane region" description="Helical" evidence="1">
    <location>
        <begin position="212"/>
        <end position="232"/>
    </location>
</feature>
<feature type="transmembrane region" description="Helical" evidence="1">
    <location>
        <begin position="267"/>
        <end position="287"/>
    </location>
</feature>
<feature type="transmembrane region" description="Helical" evidence="1">
    <location>
        <begin position="303"/>
        <end position="323"/>
    </location>
</feature>
<feature type="transmembrane region" description="Helical" evidence="1">
    <location>
        <begin position="356"/>
        <end position="376"/>
    </location>
</feature>
<feature type="transmembrane region" description="Helical" evidence="1">
    <location>
        <begin position="381"/>
        <end position="401"/>
    </location>
</feature>
<feature type="transmembrane region" description="Helical" evidence="1">
    <location>
        <begin position="413"/>
        <end position="433"/>
    </location>
</feature>
<organism>
    <name type="scientific">Xanthomonas campestris pv. campestris (strain ATCC 33913 / DSM 3586 / NCPPB 528 / LMG 568 / P 25)</name>
    <dbReference type="NCBI Taxonomy" id="190485"/>
    <lineage>
        <taxon>Bacteria</taxon>
        <taxon>Pseudomonadati</taxon>
        <taxon>Pseudomonadota</taxon>
        <taxon>Gammaproteobacteria</taxon>
        <taxon>Lysobacterales</taxon>
        <taxon>Lysobacteraceae</taxon>
        <taxon>Xanthomonas</taxon>
    </lineage>
</organism>
<dbReference type="EMBL" id="AE008922">
    <property type="protein sequence ID" value="AAM41451.1"/>
    <property type="molecule type" value="Genomic_DNA"/>
</dbReference>
<dbReference type="RefSeq" id="NP_637527.1">
    <property type="nucleotide sequence ID" value="NC_003902.1"/>
</dbReference>
<dbReference type="RefSeq" id="WP_011037317.1">
    <property type="nucleotide sequence ID" value="NC_003902.1"/>
</dbReference>
<dbReference type="SMR" id="Q8P8R8"/>
<dbReference type="STRING" id="190485.XCC2171"/>
<dbReference type="EnsemblBacteria" id="AAM41451">
    <property type="protein sequence ID" value="AAM41451"/>
    <property type="gene ID" value="XCC2171"/>
</dbReference>
<dbReference type="KEGG" id="xcc:XCC2171"/>
<dbReference type="PATRIC" id="fig|190485.4.peg.2319"/>
<dbReference type="eggNOG" id="COG1914">
    <property type="taxonomic scope" value="Bacteria"/>
</dbReference>
<dbReference type="HOGENOM" id="CLU_020088_2_0_6"/>
<dbReference type="OrthoDB" id="9787548at2"/>
<dbReference type="Proteomes" id="UP000001010">
    <property type="component" value="Chromosome"/>
</dbReference>
<dbReference type="GO" id="GO:0005886">
    <property type="term" value="C:plasma membrane"/>
    <property type="evidence" value="ECO:0000318"/>
    <property type="project" value="GO_Central"/>
</dbReference>
<dbReference type="GO" id="GO:0015086">
    <property type="term" value="F:cadmium ion transmembrane transporter activity"/>
    <property type="evidence" value="ECO:0000318"/>
    <property type="project" value="GO_Central"/>
</dbReference>
<dbReference type="GO" id="GO:0005384">
    <property type="term" value="F:manganese ion transmembrane transporter activity"/>
    <property type="evidence" value="ECO:0000318"/>
    <property type="project" value="GO_Central"/>
</dbReference>
<dbReference type="GO" id="GO:0046872">
    <property type="term" value="F:metal ion binding"/>
    <property type="evidence" value="ECO:0007669"/>
    <property type="project" value="UniProtKB-UniRule"/>
</dbReference>
<dbReference type="GO" id="GO:0015293">
    <property type="term" value="F:symporter activity"/>
    <property type="evidence" value="ECO:0007669"/>
    <property type="project" value="UniProtKB-UniRule"/>
</dbReference>
<dbReference type="GO" id="GO:0034755">
    <property type="term" value="P:iron ion transmembrane transport"/>
    <property type="evidence" value="ECO:0000318"/>
    <property type="project" value="GO_Central"/>
</dbReference>
<dbReference type="GO" id="GO:0006828">
    <property type="term" value="P:manganese ion transport"/>
    <property type="evidence" value="ECO:0000318"/>
    <property type="project" value="GO_Central"/>
</dbReference>
<dbReference type="HAMAP" id="MF_00221">
    <property type="entry name" value="NRAMP"/>
    <property type="match status" value="1"/>
</dbReference>
<dbReference type="InterPro" id="IPR001046">
    <property type="entry name" value="NRAMP_fam"/>
</dbReference>
<dbReference type="NCBIfam" id="TIGR01197">
    <property type="entry name" value="nramp"/>
    <property type="match status" value="1"/>
</dbReference>
<dbReference type="NCBIfam" id="NF037982">
    <property type="entry name" value="Nramp_1"/>
    <property type="match status" value="1"/>
</dbReference>
<dbReference type="NCBIfam" id="NF001923">
    <property type="entry name" value="PRK00701.1"/>
    <property type="match status" value="1"/>
</dbReference>
<dbReference type="PANTHER" id="PTHR11706:SF33">
    <property type="entry name" value="NATURAL RESISTANCE-ASSOCIATED MACROPHAGE PROTEIN 2"/>
    <property type="match status" value="1"/>
</dbReference>
<dbReference type="PANTHER" id="PTHR11706">
    <property type="entry name" value="SOLUTE CARRIER PROTEIN FAMILY 11 MEMBER"/>
    <property type="match status" value="1"/>
</dbReference>
<dbReference type="Pfam" id="PF01566">
    <property type="entry name" value="Nramp"/>
    <property type="match status" value="1"/>
</dbReference>
<dbReference type="PRINTS" id="PR00447">
    <property type="entry name" value="NATRESASSCMP"/>
</dbReference>
<name>MNTH_XANCP</name>
<reference key="1">
    <citation type="journal article" date="2002" name="Nature">
        <title>Comparison of the genomes of two Xanthomonas pathogens with differing host specificities.</title>
        <authorList>
            <person name="da Silva A.C.R."/>
            <person name="Ferro J.A."/>
            <person name="Reinach F.C."/>
            <person name="Farah C.S."/>
            <person name="Furlan L.R."/>
            <person name="Quaggio R.B."/>
            <person name="Monteiro-Vitorello C.B."/>
            <person name="Van Sluys M.A."/>
            <person name="Almeida N.F. Jr."/>
            <person name="Alves L.M.C."/>
            <person name="do Amaral A.M."/>
            <person name="Bertolini M.C."/>
            <person name="Camargo L.E.A."/>
            <person name="Camarotte G."/>
            <person name="Cannavan F."/>
            <person name="Cardozo J."/>
            <person name="Chambergo F."/>
            <person name="Ciapina L.P."/>
            <person name="Cicarelli R.M.B."/>
            <person name="Coutinho L.L."/>
            <person name="Cursino-Santos J.R."/>
            <person name="El-Dorry H."/>
            <person name="Faria J.B."/>
            <person name="Ferreira A.J.S."/>
            <person name="Ferreira R.C.C."/>
            <person name="Ferro M.I.T."/>
            <person name="Formighieri E.F."/>
            <person name="Franco M.C."/>
            <person name="Greggio C.C."/>
            <person name="Gruber A."/>
            <person name="Katsuyama A.M."/>
            <person name="Kishi L.T."/>
            <person name="Leite R.P."/>
            <person name="Lemos E.G.M."/>
            <person name="Lemos M.V.F."/>
            <person name="Locali E.C."/>
            <person name="Machado M.A."/>
            <person name="Madeira A.M.B.N."/>
            <person name="Martinez-Rossi N.M."/>
            <person name="Martins E.C."/>
            <person name="Meidanis J."/>
            <person name="Menck C.F.M."/>
            <person name="Miyaki C.Y."/>
            <person name="Moon D.H."/>
            <person name="Moreira L.M."/>
            <person name="Novo M.T.M."/>
            <person name="Okura V.K."/>
            <person name="Oliveira M.C."/>
            <person name="Oliveira V.R."/>
            <person name="Pereira H.A."/>
            <person name="Rossi A."/>
            <person name="Sena J.A.D."/>
            <person name="Silva C."/>
            <person name="de Souza R.F."/>
            <person name="Spinola L.A.F."/>
            <person name="Takita M.A."/>
            <person name="Tamura R.E."/>
            <person name="Teixeira E.C."/>
            <person name="Tezza R.I.D."/>
            <person name="Trindade dos Santos M."/>
            <person name="Truffi D."/>
            <person name="Tsai S.M."/>
            <person name="White F.F."/>
            <person name="Setubal J.C."/>
            <person name="Kitajima J.P."/>
        </authorList>
    </citation>
    <scope>NUCLEOTIDE SEQUENCE [LARGE SCALE GENOMIC DNA]</scope>
    <source>
        <strain>ATCC 33913 / DSM 3586 / NCPPB 528 / LMG 568 / P 25</strain>
    </source>
</reference>
<sequence length="444" mass="47102">MSSEIVPIAEPIRPADGGLGAAHASVAVPKGGHWWFRLLAFLGPGYMVSVGYMDPGNWATDLAGGSQFGYLLLSVILLSNLMAIVLQGLSARLGIATGLDLAQACRARYPRGINLALWGLCELAIIACDLAEVIGTAIALKLLFGIPLTLGAIITALDVVLVLLLMNRGFRALEAFVMALLLVIFVCFGIQIALAAPPIAAVLAGFIPRAEVVTNPHALYLAIGIIGATVMPHNLYLHSSIVQTRAYPRTDAGRRSALRWAVTDSTVALMFALFINAAILILAAAVFHAQGRTDVQEIEQAHALLAPMLGVGLASTLFAVALLASGVNSTVTATLAGQIVMEGFLRLRLPPWMRRLLTRGIAIVPVVVVTWLYGEAGTARLLVLSQVVLSMQLPFAVIPLVRFVADRGLMGALVAPAWLVRLAWVIALVIVGLNLKLLWEFALG</sequence>
<protein>
    <recommendedName>
        <fullName evidence="1">Divalent metal cation transporter MntH</fullName>
    </recommendedName>
</protein>